<sequence>MLRLDLQFFASKKGVGSTKNGRDSQSKRLGAKRADGQTVSGGSILYRQRGTKIYPGVNVGRGGDDTLYAKVDGVVRFERLGRDRKQVSVYPVAQEA</sequence>
<evidence type="ECO:0000250" key="1">
    <source>
        <dbReference type="UniProtKB" id="Q2FXT0"/>
    </source>
</evidence>
<evidence type="ECO:0000255" key="2">
    <source>
        <dbReference type="HAMAP-Rule" id="MF_00539"/>
    </source>
</evidence>
<evidence type="ECO:0000256" key="3">
    <source>
        <dbReference type="SAM" id="MobiDB-lite"/>
    </source>
</evidence>
<evidence type="ECO:0000305" key="4"/>
<feature type="propeptide" id="PRO_0000459858" evidence="1">
    <location>
        <begin position="1"/>
        <end position="9"/>
    </location>
</feature>
<feature type="chain" id="PRO_0000181037" description="Large ribosomal subunit protein bL27">
    <location>
        <begin position="10"/>
        <end position="96"/>
    </location>
</feature>
<feature type="region of interest" description="Disordered" evidence="3">
    <location>
        <begin position="14"/>
        <end position="36"/>
    </location>
</feature>
<name>RL27_BACCZ</name>
<gene>
    <name evidence="2" type="primary">rpmA</name>
    <name type="ordered locus">BCE33L4187</name>
</gene>
<accession>Q634A1</accession>
<reference key="1">
    <citation type="journal article" date="2006" name="J. Bacteriol.">
        <title>Pathogenomic sequence analysis of Bacillus cereus and Bacillus thuringiensis isolates closely related to Bacillus anthracis.</title>
        <authorList>
            <person name="Han C.S."/>
            <person name="Xie G."/>
            <person name="Challacombe J.F."/>
            <person name="Altherr M.R."/>
            <person name="Bhotika S.S."/>
            <person name="Bruce D."/>
            <person name="Campbell C.S."/>
            <person name="Campbell M.L."/>
            <person name="Chen J."/>
            <person name="Chertkov O."/>
            <person name="Cleland C."/>
            <person name="Dimitrijevic M."/>
            <person name="Doggett N.A."/>
            <person name="Fawcett J.J."/>
            <person name="Glavina T."/>
            <person name="Goodwin L.A."/>
            <person name="Hill K.K."/>
            <person name="Hitchcock P."/>
            <person name="Jackson P.J."/>
            <person name="Keim P."/>
            <person name="Kewalramani A.R."/>
            <person name="Longmire J."/>
            <person name="Lucas S."/>
            <person name="Malfatti S."/>
            <person name="McMurry K."/>
            <person name="Meincke L.J."/>
            <person name="Misra M."/>
            <person name="Moseman B.L."/>
            <person name="Mundt M."/>
            <person name="Munk A.C."/>
            <person name="Okinaka R.T."/>
            <person name="Parson-Quintana B."/>
            <person name="Reilly L.P."/>
            <person name="Richardson P."/>
            <person name="Robinson D.L."/>
            <person name="Rubin E."/>
            <person name="Saunders E."/>
            <person name="Tapia R."/>
            <person name="Tesmer J.G."/>
            <person name="Thayer N."/>
            <person name="Thompson L.S."/>
            <person name="Tice H."/>
            <person name="Ticknor L.O."/>
            <person name="Wills P.L."/>
            <person name="Brettin T.S."/>
            <person name="Gilna P."/>
        </authorList>
    </citation>
    <scope>NUCLEOTIDE SEQUENCE [LARGE SCALE GENOMIC DNA]</scope>
    <source>
        <strain>ZK / E33L</strain>
    </source>
</reference>
<comment type="PTM">
    <text evidence="1">The N-terminus is cleaved by ribosomal processing cysteine protease Prp.</text>
</comment>
<comment type="similarity">
    <text evidence="2">Belongs to the bacterial ribosomal protein bL27 family.</text>
</comment>
<proteinExistence type="inferred from homology"/>
<keyword id="KW-0687">Ribonucleoprotein</keyword>
<keyword id="KW-0689">Ribosomal protein</keyword>
<dbReference type="EMBL" id="CP000001">
    <property type="protein sequence ID" value="AAU16082.1"/>
    <property type="molecule type" value="Genomic_DNA"/>
</dbReference>
<dbReference type="RefSeq" id="WP_000944957.1">
    <property type="nucleotide sequence ID" value="NZ_CP009968.1"/>
</dbReference>
<dbReference type="SMR" id="Q634A1"/>
<dbReference type="GeneID" id="92884982"/>
<dbReference type="KEGG" id="bcz:BCE33L4187"/>
<dbReference type="PATRIC" id="fig|288681.22.peg.1196"/>
<dbReference type="Proteomes" id="UP000002612">
    <property type="component" value="Chromosome"/>
</dbReference>
<dbReference type="GO" id="GO:0022625">
    <property type="term" value="C:cytosolic large ribosomal subunit"/>
    <property type="evidence" value="ECO:0007669"/>
    <property type="project" value="TreeGrafter"/>
</dbReference>
<dbReference type="GO" id="GO:0003735">
    <property type="term" value="F:structural constituent of ribosome"/>
    <property type="evidence" value="ECO:0007669"/>
    <property type="project" value="InterPro"/>
</dbReference>
<dbReference type="GO" id="GO:0006412">
    <property type="term" value="P:translation"/>
    <property type="evidence" value="ECO:0007669"/>
    <property type="project" value="UniProtKB-UniRule"/>
</dbReference>
<dbReference type="FunFam" id="2.40.50.100:FF:000004">
    <property type="entry name" value="50S ribosomal protein L27"/>
    <property type="match status" value="1"/>
</dbReference>
<dbReference type="Gene3D" id="2.40.50.100">
    <property type="match status" value="1"/>
</dbReference>
<dbReference type="HAMAP" id="MF_00539">
    <property type="entry name" value="Ribosomal_bL27"/>
    <property type="match status" value="1"/>
</dbReference>
<dbReference type="InterPro" id="IPR001684">
    <property type="entry name" value="Ribosomal_bL27"/>
</dbReference>
<dbReference type="InterPro" id="IPR018261">
    <property type="entry name" value="Ribosomal_bL27_CS"/>
</dbReference>
<dbReference type="NCBIfam" id="TIGR00062">
    <property type="entry name" value="L27"/>
    <property type="match status" value="1"/>
</dbReference>
<dbReference type="PANTHER" id="PTHR15893:SF0">
    <property type="entry name" value="LARGE RIBOSOMAL SUBUNIT PROTEIN BL27M"/>
    <property type="match status" value="1"/>
</dbReference>
<dbReference type="PANTHER" id="PTHR15893">
    <property type="entry name" value="RIBOSOMAL PROTEIN L27"/>
    <property type="match status" value="1"/>
</dbReference>
<dbReference type="Pfam" id="PF01016">
    <property type="entry name" value="Ribosomal_L27"/>
    <property type="match status" value="1"/>
</dbReference>
<dbReference type="PRINTS" id="PR00063">
    <property type="entry name" value="RIBOSOMALL27"/>
</dbReference>
<dbReference type="SUPFAM" id="SSF110324">
    <property type="entry name" value="Ribosomal L27 protein-like"/>
    <property type="match status" value="1"/>
</dbReference>
<dbReference type="PROSITE" id="PS00831">
    <property type="entry name" value="RIBOSOMAL_L27"/>
    <property type="match status" value="1"/>
</dbReference>
<protein>
    <recommendedName>
        <fullName evidence="2">Large ribosomal subunit protein bL27</fullName>
    </recommendedName>
    <alternativeName>
        <fullName evidence="4">50S ribosomal protein L27</fullName>
    </alternativeName>
</protein>
<organism>
    <name type="scientific">Bacillus cereus (strain ZK / E33L)</name>
    <dbReference type="NCBI Taxonomy" id="288681"/>
    <lineage>
        <taxon>Bacteria</taxon>
        <taxon>Bacillati</taxon>
        <taxon>Bacillota</taxon>
        <taxon>Bacilli</taxon>
        <taxon>Bacillales</taxon>
        <taxon>Bacillaceae</taxon>
        <taxon>Bacillus</taxon>
        <taxon>Bacillus cereus group</taxon>
    </lineage>
</organism>